<proteinExistence type="inferred from homology"/>
<keyword id="KW-0328">Glycosyltransferase</keyword>
<keyword id="KW-0460">Magnesium</keyword>
<keyword id="KW-0665">Pyrimidine biosynthesis</keyword>
<keyword id="KW-0808">Transferase</keyword>
<protein>
    <recommendedName>
        <fullName evidence="1">Orotate phosphoribosyltransferase</fullName>
        <shortName evidence="1">OPRT</shortName>
        <shortName evidence="1">OPRTase</shortName>
        <ecNumber evidence="1">2.4.2.10</ecNumber>
    </recommendedName>
</protein>
<evidence type="ECO:0000255" key="1">
    <source>
        <dbReference type="HAMAP-Rule" id="MF_01208"/>
    </source>
</evidence>
<organism>
    <name type="scientific">Methylorubrum populi (strain ATCC BAA-705 / NCIMB 13946 / BJ001)</name>
    <name type="common">Methylobacterium populi</name>
    <dbReference type="NCBI Taxonomy" id="441620"/>
    <lineage>
        <taxon>Bacteria</taxon>
        <taxon>Pseudomonadati</taxon>
        <taxon>Pseudomonadota</taxon>
        <taxon>Alphaproteobacteria</taxon>
        <taxon>Hyphomicrobiales</taxon>
        <taxon>Methylobacteriaceae</taxon>
        <taxon>Methylorubrum</taxon>
    </lineage>
</organism>
<comment type="function">
    <text evidence="1">Catalyzes the transfer of a ribosyl phosphate group from 5-phosphoribose 1-diphosphate to orotate, leading to the formation of orotidine monophosphate (OMP).</text>
</comment>
<comment type="catalytic activity">
    <reaction evidence="1">
        <text>orotidine 5'-phosphate + diphosphate = orotate + 5-phospho-alpha-D-ribose 1-diphosphate</text>
        <dbReference type="Rhea" id="RHEA:10380"/>
        <dbReference type="ChEBI" id="CHEBI:30839"/>
        <dbReference type="ChEBI" id="CHEBI:33019"/>
        <dbReference type="ChEBI" id="CHEBI:57538"/>
        <dbReference type="ChEBI" id="CHEBI:58017"/>
        <dbReference type="EC" id="2.4.2.10"/>
    </reaction>
</comment>
<comment type="cofactor">
    <cofactor evidence="1">
        <name>Mg(2+)</name>
        <dbReference type="ChEBI" id="CHEBI:18420"/>
    </cofactor>
</comment>
<comment type="pathway">
    <text evidence="1">Pyrimidine metabolism; UMP biosynthesis via de novo pathway; UMP from orotate: step 1/2.</text>
</comment>
<comment type="subunit">
    <text evidence="1">Homodimer.</text>
</comment>
<comment type="similarity">
    <text evidence="1">Belongs to the purine/pyrimidine phosphoribosyltransferase family. PyrE subfamily.</text>
</comment>
<feature type="chain" id="PRO_1000138805" description="Orotate phosphoribosyltransferase">
    <location>
        <begin position="1"/>
        <end position="196"/>
    </location>
</feature>
<feature type="binding site" evidence="1">
    <location>
        <begin position="117"/>
        <end position="125"/>
    </location>
    <ligand>
        <name>5-phospho-alpha-D-ribose 1-diphosphate</name>
        <dbReference type="ChEBI" id="CHEBI:58017"/>
    </ligand>
</feature>
<feature type="binding site" evidence="1">
    <location>
        <position position="121"/>
    </location>
    <ligand>
        <name>orotate</name>
        <dbReference type="ChEBI" id="CHEBI:30839"/>
    </ligand>
</feature>
<feature type="binding site" evidence="1">
    <location>
        <position position="149"/>
    </location>
    <ligand>
        <name>orotate</name>
        <dbReference type="ChEBI" id="CHEBI:30839"/>
    </ligand>
</feature>
<dbReference type="EC" id="2.4.2.10" evidence="1"/>
<dbReference type="EMBL" id="CP001029">
    <property type="protein sequence ID" value="ACB81541.1"/>
    <property type="molecule type" value="Genomic_DNA"/>
</dbReference>
<dbReference type="RefSeq" id="WP_012455258.1">
    <property type="nucleotide sequence ID" value="NC_010725.1"/>
</dbReference>
<dbReference type="SMR" id="B1ZJQ5"/>
<dbReference type="STRING" id="441620.Mpop_3390"/>
<dbReference type="KEGG" id="mpo:Mpop_3390"/>
<dbReference type="eggNOG" id="COG0461">
    <property type="taxonomic scope" value="Bacteria"/>
</dbReference>
<dbReference type="HOGENOM" id="CLU_074878_3_0_5"/>
<dbReference type="OrthoDB" id="9783570at2"/>
<dbReference type="UniPathway" id="UPA00070">
    <property type="reaction ID" value="UER00119"/>
</dbReference>
<dbReference type="Proteomes" id="UP000007136">
    <property type="component" value="Chromosome"/>
</dbReference>
<dbReference type="GO" id="GO:0000287">
    <property type="term" value="F:magnesium ion binding"/>
    <property type="evidence" value="ECO:0007669"/>
    <property type="project" value="UniProtKB-UniRule"/>
</dbReference>
<dbReference type="GO" id="GO:0004588">
    <property type="term" value="F:orotate phosphoribosyltransferase activity"/>
    <property type="evidence" value="ECO:0007669"/>
    <property type="project" value="UniProtKB-UniRule"/>
</dbReference>
<dbReference type="GO" id="GO:0044205">
    <property type="term" value="P:'de novo' UMP biosynthetic process"/>
    <property type="evidence" value="ECO:0007669"/>
    <property type="project" value="UniProtKB-UniRule"/>
</dbReference>
<dbReference type="GO" id="GO:0019856">
    <property type="term" value="P:pyrimidine nucleobase biosynthetic process"/>
    <property type="evidence" value="ECO:0007669"/>
    <property type="project" value="InterPro"/>
</dbReference>
<dbReference type="CDD" id="cd06223">
    <property type="entry name" value="PRTases_typeI"/>
    <property type="match status" value="1"/>
</dbReference>
<dbReference type="Gene3D" id="3.40.50.2020">
    <property type="match status" value="1"/>
</dbReference>
<dbReference type="HAMAP" id="MF_01208">
    <property type="entry name" value="PyrE"/>
    <property type="match status" value="1"/>
</dbReference>
<dbReference type="InterPro" id="IPR023031">
    <property type="entry name" value="OPRT"/>
</dbReference>
<dbReference type="InterPro" id="IPR006273">
    <property type="entry name" value="Orotate_PRibTrfase_bac"/>
</dbReference>
<dbReference type="InterPro" id="IPR000836">
    <property type="entry name" value="PRibTrfase_dom"/>
</dbReference>
<dbReference type="InterPro" id="IPR029057">
    <property type="entry name" value="PRTase-like"/>
</dbReference>
<dbReference type="NCBIfam" id="TIGR01367">
    <property type="entry name" value="pyrE_Therm"/>
    <property type="match status" value="1"/>
</dbReference>
<dbReference type="PANTHER" id="PTHR19278">
    <property type="entry name" value="OROTATE PHOSPHORIBOSYLTRANSFERASE"/>
    <property type="match status" value="1"/>
</dbReference>
<dbReference type="PANTHER" id="PTHR19278:SF9">
    <property type="entry name" value="URIDINE 5'-MONOPHOSPHATE SYNTHASE"/>
    <property type="match status" value="1"/>
</dbReference>
<dbReference type="Pfam" id="PF00156">
    <property type="entry name" value="Pribosyltran"/>
    <property type="match status" value="1"/>
</dbReference>
<dbReference type="SUPFAM" id="SSF53271">
    <property type="entry name" value="PRTase-like"/>
    <property type="match status" value="1"/>
</dbReference>
<dbReference type="PROSITE" id="PS00103">
    <property type="entry name" value="PUR_PYR_PR_TRANSFER"/>
    <property type="match status" value="1"/>
</dbReference>
<sequence>MTPEEVLEEFRSAGALLQGHFILSSGLRSPTFLQKMTIFSDPARTERLCRALAEVITARFGRIDIVVSPAIGGIIPGYETARHLGAKAIFVERDPGGPFTLRRGFSIPAGSRAVIVEDIVTTGLSARECLASLKDEAGEVVGAACLIDRSGGRGEIGLPLVSLVTLDIPAYSPDALPPELAAIPPVKPGSRALPKP</sequence>
<accession>B1ZJQ5</accession>
<reference key="1">
    <citation type="submission" date="2008-04" db="EMBL/GenBank/DDBJ databases">
        <title>Complete sequence of chromosome of Methylobacterium populi BJ001.</title>
        <authorList>
            <consortium name="US DOE Joint Genome Institute"/>
            <person name="Copeland A."/>
            <person name="Lucas S."/>
            <person name="Lapidus A."/>
            <person name="Glavina del Rio T."/>
            <person name="Dalin E."/>
            <person name="Tice H."/>
            <person name="Bruce D."/>
            <person name="Goodwin L."/>
            <person name="Pitluck S."/>
            <person name="Chertkov O."/>
            <person name="Brettin T."/>
            <person name="Detter J.C."/>
            <person name="Han C."/>
            <person name="Kuske C.R."/>
            <person name="Schmutz J."/>
            <person name="Larimer F."/>
            <person name="Land M."/>
            <person name="Hauser L."/>
            <person name="Kyrpides N."/>
            <person name="Mikhailova N."/>
            <person name="Marx C."/>
            <person name="Richardson P."/>
        </authorList>
    </citation>
    <scope>NUCLEOTIDE SEQUENCE [LARGE SCALE GENOMIC DNA]</scope>
    <source>
        <strain>ATCC BAA-705 / NCIMB 13946 / BJ001</strain>
    </source>
</reference>
<gene>
    <name evidence="1" type="primary">pyrE</name>
    <name type="ordered locus">Mpop_3390</name>
</gene>
<name>PYRE_METPB</name>